<protein>
    <recommendedName>
        <fullName evidence="1">Small ribosomal subunit protein uS9</fullName>
    </recommendedName>
    <alternativeName>
        <fullName evidence="3">30S ribosomal protein S9</fullName>
    </alternativeName>
</protein>
<gene>
    <name evidence="1" type="primary">rpsI</name>
    <name type="ordered locus">SPN23F02840</name>
</gene>
<accession>B8ZL30</accession>
<feature type="chain" id="PRO_1000146472" description="Small ribosomal subunit protein uS9">
    <location>
        <begin position="1"/>
        <end position="130"/>
    </location>
</feature>
<feature type="region of interest" description="Disordered" evidence="2">
    <location>
        <begin position="106"/>
        <end position="130"/>
    </location>
</feature>
<feature type="compositionally biased region" description="Basic residues" evidence="2">
    <location>
        <begin position="111"/>
        <end position="130"/>
    </location>
</feature>
<proteinExistence type="inferred from homology"/>
<dbReference type="EMBL" id="FM211187">
    <property type="protein sequence ID" value="CAR68142.1"/>
    <property type="molecule type" value="Genomic_DNA"/>
</dbReference>
<dbReference type="RefSeq" id="WP_000075966.1">
    <property type="nucleotide sequence ID" value="NC_011900.1"/>
</dbReference>
<dbReference type="SMR" id="B8ZL30"/>
<dbReference type="KEGG" id="sne:SPN23F02840"/>
<dbReference type="HOGENOM" id="CLU_046483_2_1_9"/>
<dbReference type="GO" id="GO:0022627">
    <property type="term" value="C:cytosolic small ribosomal subunit"/>
    <property type="evidence" value="ECO:0007669"/>
    <property type="project" value="TreeGrafter"/>
</dbReference>
<dbReference type="GO" id="GO:0003723">
    <property type="term" value="F:RNA binding"/>
    <property type="evidence" value="ECO:0007669"/>
    <property type="project" value="TreeGrafter"/>
</dbReference>
<dbReference type="GO" id="GO:0003735">
    <property type="term" value="F:structural constituent of ribosome"/>
    <property type="evidence" value="ECO:0007669"/>
    <property type="project" value="InterPro"/>
</dbReference>
<dbReference type="GO" id="GO:0006412">
    <property type="term" value="P:translation"/>
    <property type="evidence" value="ECO:0007669"/>
    <property type="project" value="UniProtKB-UniRule"/>
</dbReference>
<dbReference type="FunFam" id="3.30.230.10:FF:000001">
    <property type="entry name" value="30S ribosomal protein S9"/>
    <property type="match status" value="1"/>
</dbReference>
<dbReference type="Gene3D" id="3.30.230.10">
    <property type="match status" value="1"/>
</dbReference>
<dbReference type="HAMAP" id="MF_00532_B">
    <property type="entry name" value="Ribosomal_uS9_B"/>
    <property type="match status" value="1"/>
</dbReference>
<dbReference type="InterPro" id="IPR020568">
    <property type="entry name" value="Ribosomal_Su5_D2-typ_SF"/>
</dbReference>
<dbReference type="InterPro" id="IPR000754">
    <property type="entry name" value="Ribosomal_uS9"/>
</dbReference>
<dbReference type="InterPro" id="IPR023035">
    <property type="entry name" value="Ribosomal_uS9_bac/plastid"/>
</dbReference>
<dbReference type="InterPro" id="IPR020574">
    <property type="entry name" value="Ribosomal_uS9_CS"/>
</dbReference>
<dbReference type="InterPro" id="IPR014721">
    <property type="entry name" value="Ribsml_uS5_D2-typ_fold_subgr"/>
</dbReference>
<dbReference type="NCBIfam" id="NF001099">
    <property type="entry name" value="PRK00132.1"/>
    <property type="match status" value="1"/>
</dbReference>
<dbReference type="PANTHER" id="PTHR21569">
    <property type="entry name" value="RIBOSOMAL PROTEIN S9"/>
    <property type="match status" value="1"/>
</dbReference>
<dbReference type="PANTHER" id="PTHR21569:SF1">
    <property type="entry name" value="SMALL RIBOSOMAL SUBUNIT PROTEIN US9M"/>
    <property type="match status" value="1"/>
</dbReference>
<dbReference type="Pfam" id="PF00380">
    <property type="entry name" value="Ribosomal_S9"/>
    <property type="match status" value="1"/>
</dbReference>
<dbReference type="SUPFAM" id="SSF54211">
    <property type="entry name" value="Ribosomal protein S5 domain 2-like"/>
    <property type="match status" value="1"/>
</dbReference>
<dbReference type="PROSITE" id="PS00360">
    <property type="entry name" value="RIBOSOMAL_S9"/>
    <property type="match status" value="1"/>
</dbReference>
<organism>
    <name type="scientific">Streptococcus pneumoniae (strain ATCC 700669 / Spain 23F-1)</name>
    <dbReference type="NCBI Taxonomy" id="561276"/>
    <lineage>
        <taxon>Bacteria</taxon>
        <taxon>Bacillati</taxon>
        <taxon>Bacillota</taxon>
        <taxon>Bacilli</taxon>
        <taxon>Lactobacillales</taxon>
        <taxon>Streptococcaceae</taxon>
        <taxon>Streptococcus</taxon>
    </lineage>
</organism>
<reference key="1">
    <citation type="journal article" date="2009" name="J. Bacteriol.">
        <title>Role of conjugative elements in the evolution of the multidrug-resistant pandemic clone Streptococcus pneumoniae Spain23F ST81.</title>
        <authorList>
            <person name="Croucher N.J."/>
            <person name="Walker D."/>
            <person name="Romero P."/>
            <person name="Lennard N."/>
            <person name="Paterson G.K."/>
            <person name="Bason N.C."/>
            <person name="Mitchell A.M."/>
            <person name="Quail M.A."/>
            <person name="Andrew P.W."/>
            <person name="Parkhill J."/>
            <person name="Bentley S.D."/>
            <person name="Mitchell T.J."/>
        </authorList>
    </citation>
    <scope>NUCLEOTIDE SEQUENCE [LARGE SCALE GENOMIC DNA]</scope>
    <source>
        <strain>ATCC 700669 / Spain 23F-1</strain>
    </source>
</reference>
<keyword id="KW-0687">Ribonucleoprotein</keyword>
<keyword id="KW-0689">Ribosomal protein</keyword>
<name>RS9_STRPJ</name>
<evidence type="ECO:0000255" key="1">
    <source>
        <dbReference type="HAMAP-Rule" id="MF_00532"/>
    </source>
</evidence>
<evidence type="ECO:0000256" key="2">
    <source>
        <dbReference type="SAM" id="MobiDB-lite"/>
    </source>
</evidence>
<evidence type="ECO:0000305" key="3"/>
<sequence>MSQAQYAGTGRRKNAVARVRLVPGTGKITVNKKDVEEYIPHADLRLVINQPFAVTSTVGSYDVFVNVIGGGYAGQSGAIRHGIARALLQVDPDFRDSLKRAGLLTRDSRKVERKKPGLKKARKASQFSKR</sequence>
<comment type="similarity">
    <text evidence="1">Belongs to the universal ribosomal protein uS9 family.</text>
</comment>